<reference key="1">
    <citation type="journal article" date="2002" name="Nature">
        <title>The genome sequence of Schizosaccharomyces pombe.</title>
        <authorList>
            <person name="Wood V."/>
            <person name="Gwilliam R."/>
            <person name="Rajandream M.A."/>
            <person name="Lyne M.H."/>
            <person name="Lyne R."/>
            <person name="Stewart A."/>
            <person name="Sgouros J.G."/>
            <person name="Peat N."/>
            <person name="Hayles J."/>
            <person name="Baker S.G."/>
            <person name="Basham D."/>
            <person name="Bowman S."/>
            <person name="Brooks K."/>
            <person name="Brown D."/>
            <person name="Brown S."/>
            <person name="Chillingworth T."/>
            <person name="Churcher C.M."/>
            <person name="Collins M."/>
            <person name="Connor R."/>
            <person name="Cronin A."/>
            <person name="Davis P."/>
            <person name="Feltwell T."/>
            <person name="Fraser A."/>
            <person name="Gentles S."/>
            <person name="Goble A."/>
            <person name="Hamlin N."/>
            <person name="Harris D.E."/>
            <person name="Hidalgo J."/>
            <person name="Hodgson G."/>
            <person name="Holroyd S."/>
            <person name="Hornsby T."/>
            <person name="Howarth S."/>
            <person name="Huckle E.J."/>
            <person name="Hunt S."/>
            <person name="Jagels K."/>
            <person name="James K.D."/>
            <person name="Jones L."/>
            <person name="Jones M."/>
            <person name="Leather S."/>
            <person name="McDonald S."/>
            <person name="McLean J."/>
            <person name="Mooney P."/>
            <person name="Moule S."/>
            <person name="Mungall K.L."/>
            <person name="Murphy L.D."/>
            <person name="Niblett D."/>
            <person name="Odell C."/>
            <person name="Oliver K."/>
            <person name="O'Neil S."/>
            <person name="Pearson D."/>
            <person name="Quail M.A."/>
            <person name="Rabbinowitsch E."/>
            <person name="Rutherford K.M."/>
            <person name="Rutter S."/>
            <person name="Saunders D."/>
            <person name="Seeger K."/>
            <person name="Sharp S."/>
            <person name="Skelton J."/>
            <person name="Simmonds M.N."/>
            <person name="Squares R."/>
            <person name="Squares S."/>
            <person name="Stevens K."/>
            <person name="Taylor K."/>
            <person name="Taylor R.G."/>
            <person name="Tivey A."/>
            <person name="Walsh S.V."/>
            <person name="Warren T."/>
            <person name="Whitehead S."/>
            <person name="Woodward J.R."/>
            <person name="Volckaert G."/>
            <person name="Aert R."/>
            <person name="Robben J."/>
            <person name="Grymonprez B."/>
            <person name="Weltjens I."/>
            <person name="Vanstreels E."/>
            <person name="Rieger M."/>
            <person name="Schaefer M."/>
            <person name="Mueller-Auer S."/>
            <person name="Gabel C."/>
            <person name="Fuchs M."/>
            <person name="Duesterhoeft A."/>
            <person name="Fritzc C."/>
            <person name="Holzer E."/>
            <person name="Moestl D."/>
            <person name="Hilbert H."/>
            <person name="Borzym K."/>
            <person name="Langer I."/>
            <person name="Beck A."/>
            <person name="Lehrach H."/>
            <person name="Reinhardt R."/>
            <person name="Pohl T.M."/>
            <person name="Eger P."/>
            <person name="Zimmermann W."/>
            <person name="Wedler H."/>
            <person name="Wambutt R."/>
            <person name="Purnelle B."/>
            <person name="Goffeau A."/>
            <person name="Cadieu E."/>
            <person name="Dreano S."/>
            <person name="Gloux S."/>
            <person name="Lelaure V."/>
            <person name="Mottier S."/>
            <person name="Galibert F."/>
            <person name="Aves S.J."/>
            <person name="Xiang Z."/>
            <person name="Hunt C."/>
            <person name="Moore K."/>
            <person name="Hurst S.M."/>
            <person name="Lucas M."/>
            <person name="Rochet M."/>
            <person name="Gaillardin C."/>
            <person name="Tallada V.A."/>
            <person name="Garzon A."/>
            <person name="Thode G."/>
            <person name="Daga R.R."/>
            <person name="Cruzado L."/>
            <person name="Jimenez J."/>
            <person name="Sanchez M."/>
            <person name="del Rey F."/>
            <person name="Benito J."/>
            <person name="Dominguez A."/>
            <person name="Revuelta J.L."/>
            <person name="Moreno S."/>
            <person name="Armstrong J."/>
            <person name="Forsburg S.L."/>
            <person name="Cerutti L."/>
            <person name="Lowe T."/>
            <person name="McCombie W.R."/>
            <person name="Paulsen I."/>
            <person name="Potashkin J."/>
            <person name="Shpakovski G.V."/>
            <person name="Ussery D."/>
            <person name="Barrell B.G."/>
            <person name="Nurse P."/>
        </authorList>
    </citation>
    <scope>NUCLEOTIDE SEQUENCE [LARGE SCALE GENOMIC DNA]</scope>
    <source>
        <strain>972 / ATCC 24843</strain>
    </source>
</reference>
<reference key="2">
    <citation type="journal article" date="2006" name="Nat. Biotechnol.">
        <title>ORFeome cloning and global analysis of protein localization in the fission yeast Schizosaccharomyces pombe.</title>
        <authorList>
            <person name="Matsuyama A."/>
            <person name="Arai R."/>
            <person name="Yashiroda Y."/>
            <person name="Shirai A."/>
            <person name="Kamata A."/>
            <person name="Sekido S."/>
            <person name="Kobayashi Y."/>
            <person name="Hashimoto A."/>
            <person name="Hamamoto M."/>
            <person name="Hiraoka Y."/>
            <person name="Horinouchi S."/>
            <person name="Yoshida M."/>
        </authorList>
    </citation>
    <scope>SUBCELLULAR LOCATION [LARGE SCALE ANALYSIS]</scope>
</reference>
<gene>
    <name type="primary">adl1</name>
    <name type="synonym">lig3</name>
    <name type="ORF">SPBC713.06</name>
</gene>
<keyword id="KW-0067">ATP-binding</keyword>
<keyword id="KW-0235">DNA replication</keyword>
<keyword id="KW-0436">Ligase</keyword>
<keyword id="KW-0547">Nucleotide-binding</keyword>
<keyword id="KW-0539">Nucleus</keyword>
<keyword id="KW-1185">Reference proteome</keyword>
<evidence type="ECO:0000255" key="1">
    <source>
        <dbReference type="PROSITE-ProRule" id="PRU10135"/>
    </source>
</evidence>
<evidence type="ECO:0000256" key="2">
    <source>
        <dbReference type="SAM" id="MobiDB-lite"/>
    </source>
</evidence>
<evidence type="ECO:0000269" key="3">
    <source>
    </source>
</evidence>
<evidence type="ECO:0000305" key="4"/>
<dbReference type="EC" id="6.5.1.1" evidence="1"/>
<dbReference type="EMBL" id="CU329671">
    <property type="protein sequence ID" value="CAC22607.1"/>
    <property type="molecule type" value="Genomic_DNA"/>
</dbReference>
<dbReference type="RefSeq" id="NP_595345.1">
    <property type="nucleotide sequence ID" value="NM_001021253.2"/>
</dbReference>
<dbReference type="SMR" id="Q9C1W9"/>
<dbReference type="FunCoup" id="Q9C1W9">
    <property type="interactions" value="271"/>
</dbReference>
<dbReference type="STRING" id="284812.Q9C1W9"/>
<dbReference type="iPTMnet" id="Q9C1W9"/>
<dbReference type="PaxDb" id="4896-SPBC713.06.1"/>
<dbReference type="EnsemblFungi" id="SPBC713.06.1">
    <property type="protein sequence ID" value="SPBC713.06.1:pep"/>
    <property type="gene ID" value="SPBC713.06"/>
</dbReference>
<dbReference type="GeneID" id="2541111"/>
<dbReference type="KEGG" id="spo:2541111"/>
<dbReference type="PomBase" id="SPBC713.06">
    <property type="gene designation" value="adl1"/>
</dbReference>
<dbReference type="VEuPathDB" id="FungiDB:SPBC713.06"/>
<dbReference type="eggNOG" id="KOG0967">
    <property type="taxonomic scope" value="Eukaryota"/>
</dbReference>
<dbReference type="HOGENOM" id="CLU_005138_1_1_1"/>
<dbReference type="InParanoid" id="Q9C1W9"/>
<dbReference type="OMA" id="RDFSCEY"/>
<dbReference type="PhylomeDB" id="Q9C1W9"/>
<dbReference type="PRO" id="PR:Q9C1W9"/>
<dbReference type="Proteomes" id="UP000002485">
    <property type="component" value="Chromosome II"/>
</dbReference>
<dbReference type="GO" id="GO:0005634">
    <property type="term" value="C:nucleus"/>
    <property type="evidence" value="ECO:0007005"/>
    <property type="project" value="PomBase"/>
</dbReference>
<dbReference type="GO" id="GO:0005524">
    <property type="term" value="F:ATP binding"/>
    <property type="evidence" value="ECO:0007669"/>
    <property type="project" value="UniProtKB-KW"/>
</dbReference>
<dbReference type="GO" id="GO:0003677">
    <property type="term" value="F:DNA binding"/>
    <property type="evidence" value="ECO:0007669"/>
    <property type="project" value="InterPro"/>
</dbReference>
<dbReference type="GO" id="GO:0003910">
    <property type="term" value="F:DNA ligase (ATP) activity"/>
    <property type="evidence" value="ECO:0000318"/>
    <property type="project" value="GO_Central"/>
</dbReference>
<dbReference type="GO" id="GO:0071897">
    <property type="term" value="P:DNA biosynthetic process"/>
    <property type="evidence" value="ECO:0000305"/>
    <property type="project" value="PomBase"/>
</dbReference>
<dbReference type="GO" id="GO:0006310">
    <property type="term" value="P:DNA recombination"/>
    <property type="evidence" value="ECO:0007669"/>
    <property type="project" value="InterPro"/>
</dbReference>
<dbReference type="GO" id="GO:0006281">
    <property type="term" value="P:DNA repair"/>
    <property type="evidence" value="ECO:0007669"/>
    <property type="project" value="InterPro"/>
</dbReference>
<dbReference type="GO" id="GO:0006273">
    <property type="term" value="P:lagging strand elongation"/>
    <property type="evidence" value="ECO:0000318"/>
    <property type="project" value="GO_Central"/>
</dbReference>
<dbReference type="CDD" id="cd07900">
    <property type="entry name" value="Adenylation_DNA_ligase_I_Euk"/>
    <property type="match status" value="1"/>
</dbReference>
<dbReference type="CDD" id="cd07969">
    <property type="entry name" value="OBF_DNA_ligase_I"/>
    <property type="match status" value="1"/>
</dbReference>
<dbReference type="FunFam" id="2.40.50.140:FF:000062">
    <property type="entry name" value="DNA ligase"/>
    <property type="match status" value="1"/>
</dbReference>
<dbReference type="FunFam" id="3.30.470.30:FF:000002">
    <property type="entry name" value="DNA ligase"/>
    <property type="match status" value="1"/>
</dbReference>
<dbReference type="Gene3D" id="3.30.1490.70">
    <property type="match status" value="1"/>
</dbReference>
<dbReference type="Gene3D" id="1.10.3260.10">
    <property type="entry name" value="DNA ligase, ATP-dependent, N-terminal domain"/>
    <property type="match status" value="1"/>
</dbReference>
<dbReference type="Gene3D" id="3.30.470.30">
    <property type="entry name" value="DNA ligase/mRNA capping enzyme"/>
    <property type="match status" value="1"/>
</dbReference>
<dbReference type="Gene3D" id="2.40.50.140">
    <property type="entry name" value="Nucleic acid-binding proteins"/>
    <property type="match status" value="1"/>
</dbReference>
<dbReference type="InterPro" id="IPR050191">
    <property type="entry name" value="ATP-dep_DNA_ligase"/>
</dbReference>
<dbReference type="InterPro" id="IPR000977">
    <property type="entry name" value="DNA_ligase_ATP-dep"/>
</dbReference>
<dbReference type="InterPro" id="IPR012309">
    <property type="entry name" value="DNA_ligase_ATP-dep_C"/>
</dbReference>
<dbReference type="InterPro" id="IPR012310">
    <property type="entry name" value="DNA_ligase_ATP-dep_cent"/>
</dbReference>
<dbReference type="InterPro" id="IPR016059">
    <property type="entry name" value="DNA_ligase_ATP-dep_CS"/>
</dbReference>
<dbReference type="InterPro" id="IPR012308">
    <property type="entry name" value="DNA_ligase_ATP-dep_N"/>
</dbReference>
<dbReference type="InterPro" id="IPR036599">
    <property type="entry name" value="DNA_ligase_N_sf"/>
</dbReference>
<dbReference type="InterPro" id="IPR012340">
    <property type="entry name" value="NA-bd_OB-fold"/>
</dbReference>
<dbReference type="NCBIfam" id="TIGR00574">
    <property type="entry name" value="dnl1"/>
    <property type="match status" value="1"/>
</dbReference>
<dbReference type="PANTHER" id="PTHR45674">
    <property type="entry name" value="DNA LIGASE 1/3 FAMILY MEMBER"/>
    <property type="match status" value="1"/>
</dbReference>
<dbReference type="PANTHER" id="PTHR45674:SF9">
    <property type="entry name" value="DNA LIGASE 3"/>
    <property type="match status" value="1"/>
</dbReference>
<dbReference type="Pfam" id="PF04679">
    <property type="entry name" value="DNA_ligase_A_C"/>
    <property type="match status" value="1"/>
</dbReference>
<dbReference type="Pfam" id="PF01068">
    <property type="entry name" value="DNA_ligase_A_M"/>
    <property type="match status" value="1"/>
</dbReference>
<dbReference type="Pfam" id="PF04675">
    <property type="entry name" value="DNA_ligase_A_N"/>
    <property type="match status" value="1"/>
</dbReference>
<dbReference type="SUPFAM" id="SSF117018">
    <property type="entry name" value="ATP-dependent DNA ligase DNA-binding domain"/>
    <property type="match status" value="1"/>
</dbReference>
<dbReference type="SUPFAM" id="SSF56091">
    <property type="entry name" value="DNA ligase/mRNA capping enzyme, catalytic domain"/>
    <property type="match status" value="1"/>
</dbReference>
<dbReference type="SUPFAM" id="SSF50249">
    <property type="entry name" value="Nucleic acid-binding proteins"/>
    <property type="match status" value="1"/>
</dbReference>
<dbReference type="PROSITE" id="PS00697">
    <property type="entry name" value="DNA_LIGASE_A1"/>
    <property type="match status" value="1"/>
</dbReference>
<dbReference type="PROSITE" id="PS50160">
    <property type="entry name" value="DNA_LIGASE_A3"/>
    <property type="match status" value="1"/>
</dbReference>
<organism>
    <name type="scientific">Schizosaccharomyces pombe (strain 972 / ATCC 24843)</name>
    <name type="common">Fission yeast</name>
    <dbReference type="NCBI Taxonomy" id="284812"/>
    <lineage>
        <taxon>Eukaryota</taxon>
        <taxon>Fungi</taxon>
        <taxon>Dikarya</taxon>
        <taxon>Ascomycota</taxon>
        <taxon>Taphrinomycotina</taxon>
        <taxon>Schizosaccharomycetes</taxon>
        <taxon>Schizosaccharomycetales</taxon>
        <taxon>Schizosaccharomycetaceae</taxon>
        <taxon>Schizosaccharomyces</taxon>
    </lineage>
</organism>
<name>DNLI3_SCHPO</name>
<feature type="chain" id="PRO_0000372334" description="DNA ligase 3">
    <location>
        <begin position="1"/>
        <end position="774"/>
    </location>
</feature>
<feature type="region of interest" description="Disordered" evidence="2">
    <location>
        <begin position="1"/>
        <end position="25"/>
    </location>
</feature>
<feature type="active site" description="N6-AMP-lysine intermediate" evidence="1">
    <location>
        <position position="433"/>
    </location>
</feature>
<comment type="catalytic activity">
    <reaction evidence="1">
        <text>ATP + (deoxyribonucleotide)n-3'-hydroxyl + 5'-phospho-(deoxyribonucleotide)m = (deoxyribonucleotide)n+m + AMP + diphosphate.</text>
        <dbReference type="EC" id="6.5.1.1"/>
    </reaction>
</comment>
<comment type="subcellular location">
    <subcellularLocation>
        <location evidence="3">Nucleus</location>
    </subcellularLocation>
</comment>
<comment type="similarity">
    <text evidence="4">Belongs to the ATP-dependent DNA ligase family.</text>
</comment>
<accession>Q9C1W9</accession>
<proteinExistence type="inferred from homology"/>
<sequence length="774" mass="87587">MPPKKRMKNGSSLKSTSKKGEKSRNIITIQDLFSKREAQLTDTPNKLLTDHDQSASDYAYALKLQQLFDSENQATAPEKLPKDVIIPEEEYHTDTFNVVKESNDKPKENLVTSEECKASFFSTDSVNKDSTIDYDALQKDPLTYVKSCRARFVSKDTKSFSYSSLANTFSLISSTKSRIRIVTLLTNFLLTLLYADPDSLIATVWLCTNSIAPNFYGKNLGVGPAMYSKALKEVCGITASALKNLWNKYGDPGDVAFEAKVSVRTLSRPEPLTIKKVYSTLLKIADSNGNGAQNRKLELTKFLLISSNAEEVRYIGRSIMQNLRIGAVQNTMLASLSKAFFIFDNQNEIFNFNSDSLQQQFRQGEEIVKQSFFQVPDYNILVATLLREGIENLKDNMSIRPGIPVKPMLGSITKNLQHMLERLTDHNFSCEFKYDGQRAQIHCDRLGNIKIFSRHLEEITGRFPDVIEVAQLALKHSCDFIIEGELVAIDKSNGQILDFQKLSTRERKKVTVADITIDVCVFVFDIMFCDGKSCLQMPLIERRRMFFEHFNLIPNRFQFVSSLETNEEQSIQEFFSLAITNKCEGLMVKVLNGTNSKFPSTYEPDKRGEGWIKVKQDYDDEFESLDLVPIGAWYGNGRKAGWFSPILLAVYNPDTGAYEAVCKCMSGFSDQFYKELTQKYSLESGNSSLKPIYNFCETGKVTPQIYFAPQEVWEIKGAQITSSPAYKAALGLIQDDRGLSIRFPRFIRVRSDKGPEDASTNSILADMYMKQLNT</sequence>
<protein>
    <recommendedName>
        <fullName>DNA ligase 3</fullName>
        <ecNumber evidence="1">6.5.1.1</ecNumber>
    </recommendedName>
    <alternativeName>
        <fullName>DNA ligase III</fullName>
    </alternativeName>
    <alternativeName>
        <fullName>Polydeoxyribonucleotide synthase [ATP] 3</fullName>
    </alternativeName>
</protein>